<gene>
    <name evidence="1" type="primary">mraZ</name>
    <name type="ordered locus">Bxeno_A3918</name>
    <name type="ORF">Bxe_A0477</name>
</gene>
<proteinExistence type="inferred from homology"/>
<dbReference type="EMBL" id="CP000270">
    <property type="protein sequence ID" value="ABE32456.1"/>
    <property type="molecule type" value="Genomic_DNA"/>
</dbReference>
<dbReference type="RefSeq" id="WP_011489925.1">
    <property type="nucleotide sequence ID" value="NC_007951.1"/>
</dbReference>
<dbReference type="SMR" id="Q13TY3"/>
<dbReference type="STRING" id="266265.Bxe_A0477"/>
<dbReference type="KEGG" id="bxb:DR64_2653"/>
<dbReference type="KEGG" id="bxe:Bxe_A0477"/>
<dbReference type="PATRIC" id="fig|266265.5.peg.4139"/>
<dbReference type="eggNOG" id="COG2001">
    <property type="taxonomic scope" value="Bacteria"/>
</dbReference>
<dbReference type="OrthoDB" id="9807753at2"/>
<dbReference type="Proteomes" id="UP000001817">
    <property type="component" value="Chromosome 1"/>
</dbReference>
<dbReference type="GO" id="GO:0005737">
    <property type="term" value="C:cytoplasm"/>
    <property type="evidence" value="ECO:0007669"/>
    <property type="project" value="UniProtKB-UniRule"/>
</dbReference>
<dbReference type="GO" id="GO:0009295">
    <property type="term" value="C:nucleoid"/>
    <property type="evidence" value="ECO:0007669"/>
    <property type="project" value="UniProtKB-SubCell"/>
</dbReference>
<dbReference type="GO" id="GO:0003700">
    <property type="term" value="F:DNA-binding transcription factor activity"/>
    <property type="evidence" value="ECO:0007669"/>
    <property type="project" value="UniProtKB-UniRule"/>
</dbReference>
<dbReference type="GO" id="GO:0000976">
    <property type="term" value="F:transcription cis-regulatory region binding"/>
    <property type="evidence" value="ECO:0007669"/>
    <property type="project" value="TreeGrafter"/>
</dbReference>
<dbReference type="GO" id="GO:2000143">
    <property type="term" value="P:negative regulation of DNA-templated transcription initiation"/>
    <property type="evidence" value="ECO:0007669"/>
    <property type="project" value="TreeGrafter"/>
</dbReference>
<dbReference type="CDD" id="cd16321">
    <property type="entry name" value="MraZ_C"/>
    <property type="match status" value="1"/>
</dbReference>
<dbReference type="CDD" id="cd16320">
    <property type="entry name" value="MraZ_N"/>
    <property type="match status" value="1"/>
</dbReference>
<dbReference type="Gene3D" id="3.40.1550.20">
    <property type="entry name" value="Transcriptional regulator MraZ domain"/>
    <property type="match status" value="1"/>
</dbReference>
<dbReference type="HAMAP" id="MF_01008">
    <property type="entry name" value="MraZ"/>
    <property type="match status" value="1"/>
</dbReference>
<dbReference type="InterPro" id="IPR003444">
    <property type="entry name" value="MraZ"/>
</dbReference>
<dbReference type="InterPro" id="IPR035644">
    <property type="entry name" value="MraZ_C"/>
</dbReference>
<dbReference type="InterPro" id="IPR020603">
    <property type="entry name" value="MraZ_dom"/>
</dbReference>
<dbReference type="InterPro" id="IPR035642">
    <property type="entry name" value="MraZ_N"/>
</dbReference>
<dbReference type="InterPro" id="IPR038619">
    <property type="entry name" value="MraZ_sf"/>
</dbReference>
<dbReference type="InterPro" id="IPR007159">
    <property type="entry name" value="SpoVT-AbrB_dom"/>
</dbReference>
<dbReference type="InterPro" id="IPR037914">
    <property type="entry name" value="SpoVT-AbrB_sf"/>
</dbReference>
<dbReference type="NCBIfam" id="TIGR00242">
    <property type="entry name" value="division/cell wall cluster transcriptional repressor MraZ"/>
    <property type="match status" value="1"/>
</dbReference>
<dbReference type="PANTHER" id="PTHR34701">
    <property type="entry name" value="TRANSCRIPTIONAL REGULATOR MRAZ"/>
    <property type="match status" value="1"/>
</dbReference>
<dbReference type="PANTHER" id="PTHR34701:SF1">
    <property type="entry name" value="TRANSCRIPTIONAL REGULATOR MRAZ"/>
    <property type="match status" value="1"/>
</dbReference>
<dbReference type="Pfam" id="PF02381">
    <property type="entry name" value="MraZ"/>
    <property type="match status" value="2"/>
</dbReference>
<dbReference type="SUPFAM" id="SSF89447">
    <property type="entry name" value="AbrB/MazE/MraZ-like"/>
    <property type="match status" value="1"/>
</dbReference>
<dbReference type="PROSITE" id="PS51740">
    <property type="entry name" value="SPOVT_ABRB"/>
    <property type="match status" value="2"/>
</dbReference>
<name>MRAZ_PARXL</name>
<organism>
    <name type="scientific">Paraburkholderia xenovorans (strain LB400)</name>
    <dbReference type="NCBI Taxonomy" id="266265"/>
    <lineage>
        <taxon>Bacteria</taxon>
        <taxon>Pseudomonadati</taxon>
        <taxon>Pseudomonadota</taxon>
        <taxon>Betaproteobacteria</taxon>
        <taxon>Burkholderiales</taxon>
        <taxon>Burkholderiaceae</taxon>
        <taxon>Paraburkholderia</taxon>
    </lineage>
</organism>
<comment type="subunit">
    <text evidence="1">Forms oligomers.</text>
</comment>
<comment type="subcellular location">
    <subcellularLocation>
        <location evidence="1">Cytoplasm</location>
        <location evidence="1">Nucleoid</location>
    </subcellularLocation>
</comment>
<comment type="similarity">
    <text evidence="1">Belongs to the MraZ family.</text>
</comment>
<keyword id="KW-0963">Cytoplasm</keyword>
<keyword id="KW-0238">DNA-binding</keyword>
<keyword id="KW-1185">Reference proteome</keyword>
<keyword id="KW-0677">Repeat</keyword>
<keyword id="KW-0804">Transcription</keyword>
<keyword id="KW-0805">Transcription regulation</keyword>
<evidence type="ECO:0000255" key="1">
    <source>
        <dbReference type="HAMAP-Rule" id="MF_01008"/>
    </source>
</evidence>
<evidence type="ECO:0000255" key="2">
    <source>
        <dbReference type="PROSITE-ProRule" id="PRU01076"/>
    </source>
</evidence>
<sequence>MFQGASALTLDAKGRMSIPSRYRDALQTQAEGRVTITRHPDGCLLLFPRPEWEIFRDKVDKLPMNATWWKRIFLGNAMDVDMDGAGRVLVSPELRTAGGLAKEVTLLGMGRHFELWDAQTYTAKEQAAMAEGMPDALKDFTF</sequence>
<accession>Q13TY3</accession>
<reference key="1">
    <citation type="journal article" date="2006" name="Proc. Natl. Acad. Sci. U.S.A.">
        <title>Burkholderia xenovorans LB400 harbors a multi-replicon, 9.73-Mbp genome shaped for versatility.</title>
        <authorList>
            <person name="Chain P.S.G."/>
            <person name="Denef V.J."/>
            <person name="Konstantinidis K.T."/>
            <person name="Vergez L.M."/>
            <person name="Agullo L."/>
            <person name="Reyes V.L."/>
            <person name="Hauser L."/>
            <person name="Cordova M."/>
            <person name="Gomez L."/>
            <person name="Gonzalez M."/>
            <person name="Land M."/>
            <person name="Lao V."/>
            <person name="Larimer F."/>
            <person name="LiPuma J.J."/>
            <person name="Mahenthiralingam E."/>
            <person name="Malfatti S.A."/>
            <person name="Marx C.J."/>
            <person name="Parnell J.J."/>
            <person name="Ramette A."/>
            <person name="Richardson P."/>
            <person name="Seeger M."/>
            <person name="Smith D."/>
            <person name="Spilker T."/>
            <person name="Sul W.J."/>
            <person name="Tsoi T.V."/>
            <person name="Ulrich L.E."/>
            <person name="Zhulin I.B."/>
            <person name="Tiedje J.M."/>
        </authorList>
    </citation>
    <scope>NUCLEOTIDE SEQUENCE [LARGE SCALE GENOMIC DNA]</scope>
    <source>
        <strain>LB400</strain>
    </source>
</reference>
<feature type="chain" id="PRO_1000062860" description="Transcriptional regulator MraZ">
    <location>
        <begin position="1"/>
        <end position="142"/>
    </location>
</feature>
<feature type="domain" description="SpoVT-AbrB 1" evidence="2">
    <location>
        <begin position="5"/>
        <end position="51"/>
    </location>
</feature>
<feature type="domain" description="SpoVT-AbrB 2" evidence="2">
    <location>
        <begin position="77"/>
        <end position="120"/>
    </location>
</feature>
<protein>
    <recommendedName>
        <fullName>Transcriptional regulator MraZ</fullName>
    </recommendedName>
</protein>